<sequence length="872" mass="99904">MSNVTPMMQQYLKIKSEYQDCLLFFRLGDFYEMFYEDAKEASRVLEITLTKRDAKKENPIPMCGVPYHSADSYIDTLVNNGYKVAICEQMEDPKQTKGMVRREVVRIVTPGTVMEQGGVDDKQNNYILSFVMNQPEIALSYCDVSTGELKVTHFNDEATLLNEITTINPNEVVINDNISDNLKRQINMVTETITVRETLSSEIYSVNQTEHKLMYQATQLLLDYIHHTQKRDLSHIEDVVQYAAIDYMKMDFYAKRNLELTESIRLKSKKGTLLWLMDETKTPMGARRLKQWIDRPLISKEQIEARLDIVDEFSAHFIERDTLRTYLNQVYDIERLVGRVSYGNVNARDLIQLKHSISEIPNIKALLNSMNQNTLVQVNQLEPLDDLLDILEQSLVEEPPISVKDGGLFKVGFNTQLDEYLEASKNGKTWLAELQAKERQRTGIKSLKISFNKVFGYFIEITRANLQNFEPSEFGYMRKQTLSNAERFITDELKEKEDIILGAEDKAIELEYQLFVQLREEVKKYTERLQQQAKIISELDCLQSFAEIAQKYNYTRPSFSENKTLELVESRHPVVERVMDYNDYVPNNCRLDNETFIYLITGPNMSGKSTYMRQVAIISIMAQMGAYVPCKEAVLPIFDQIFTRIGAADDLVSGKSTFMVEMLEAQKALTYATEDSLIIFDEIGRGTSTYDGLALAQAMIEYVAETSHAKTLFSTHYHELTTLDQALPSLKNVHVAANEYKGELIFLHKVKDGAVDDSYGIQVAKLADLPEKVISRAQVILSEFEASAGKKSSISNLKMVENEPEINQENLNLSVEETTDTLSQKDFEQASFDLFENDQESEIELQIKNLNLSNMTPIEALVKLSELQNQLK</sequence>
<evidence type="ECO:0000255" key="1">
    <source>
        <dbReference type="HAMAP-Rule" id="MF_00096"/>
    </source>
</evidence>
<gene>
    <name evidence="1" type="primary">mutS</name>
    <name type="ordered locus">NWMN_1204</name>
</gene>
<feature type="chain" id="PRO_1000071279" description="DNA mismatch repair protein MutS">
    <location>
        <begin position="1"/>
        <end position="872"/>
    </location>
</feature>
<feature type="binding site" evidence="1">
    <location>
        <begin position="602"/>
        <end position="609"/>
    </location>
    <ligand>
        <name>ATP</name>
        <dbReference type="ChEBI" id="CHEBI:30616"/>
    </ligand>
</feature>
<name>MUTS_STAAE</name>
<organism>
    <name type="scientific">Staphylococcus aureus (strain Newman)</name>
    <dbReference type="NCBI Taxonomy" id="426430"/>
    <lineage>
        <taxon>Bacteria</taxon>
        <taxon>Bacillati</taxon>
        <taxon>Bacillota</taxon>
        <taxon>Bacilli</taxon>
        <taxon>Bacillales</taxon>
        <taxon>Staphylococcaceae</taxon>
        <taxon>Staphylococcus</taxon>
    </lineage>
</organism>
<proteinExistence type="inferred from homology"/>
<protein>
    <recommendedName>
        <fullName evidence="1">DNA mismatch repair protein MutS</fullName>
    </recommendedName>
</protein>
<dbReference type="EMBL" id="AP009351">
    <property type="protein sequence ID" value="BAF67476.1"/>
    <property type="molecule type" value="Genomic_DNA"/>
</dbReference>
<dbReference type="RefSeq" id="WP_000073352.1">
    <property type="nucleotide sequence ID" value="NZ_JBBIAE010000001.1"/>
</dbReference>
<dbReference type="SMR" id="A6QGJ4"/>
<dbReference type="KEGG" id="sae:NWMN_1204"/>
<dbReference type="HOGENOM" id="CLU_002472_4_0_9"/>
<dbReference type="Proteomes" id="UP000006386">
    <property type="component" value="Chromosome"/>
</dbReference>
<dbReference type="GO" id="GO:0005829">
    <property type="term" value="C:cytosol"/>
    <property type="evidence" value="ECO:0007669"/>
    <property type="project" value="TreeGrafter"/>
</dbReference>
<dbReference type="GO" id="GO:0005524">
    <property type="term" value="F:ATP binding"/>
    <property type="evidence" value="ECO:0007669"/>
    <property type="project" value="UniProtKB-UniRule"/>
</dbReference>
<dbReference type="GO" id="GO:0140664">
    <property type="term" value="F:ATP-dependent DNA damage sensor activity"/>
    <property type="evidence" value="ECO:0007669"/>
    <property type="project" value="InterPro"/>
</dbReference>
<dbReference type="GO" id="GO:0003684">
    <property type="term" value="F:damaged DNA binding"/>
    <property type="evidence" value="ECO:0007669"/>
    <property type="project" value="UniProtKB-UniRule"/>
</dbReference>
<dbReference type="GO" id="GO:0030983">
    <property type="term" value="F:mismatched DNA binding"/>
    <property type="evidence" value="ECO:0007669"/>
    <property type="project" value="InterPro"/>
</dbReference>
<dbReference type="GO" id="GO:0006298">
    <property type="term" value="P:mismatch repair"/>
    <property type="evidence" value="ECO:0007669"/>
    <property type="project" value="UniProtKB-UniRule"/>
</dbReference>
<dbReference type="CDD" id="cd03284">
    <property type="entry name" value="ABC_MutS1"/>
    <property type="match status" value="1"/>
</dbReference>
<dbReference type="FunFam" id="1.10.1420.10:FF:000007">
    <property type="entry name" value="DNA mismatch repair protein MutS"/>
    <property type="match status" value="1"/>
</dbReference>
<dbReference type="FunFam" id="3.40.1170.10:FF:000001">
    <property type="entry name" value="DNA mismatch repair protein MutS"/>
    <property type="match status" value="1"/>
</dbReference>
<dbReference type="FunFam" id="3.40.50.300:FF:000896">
    <property type="entry name" value="DNA mismatch repair protein MutS"/>
    <property type="match status" value="1"/>
</dbReference>
<dbReference type="Gene3D" id="1.10.1420.10">
    <property type="match status" value="2"/>
</dbReference>
<dbReference type="Gene3D" id="3.40.1170.10">
    <property type="entry name" value="DNA repair protein MutS, domain I"/>
    <property type="match status" value="1"/>
</dbReference>
<dbReference type="Gene3D" id="3.30.420.110">
    <property type="entry name" value="MutS, connector domain"/>
    <property type="match status" value="1"/>
</dbReference>
<dbReference type="Gene3D" id="3.40.50.300">
    <property type="entry name" value="P-loop containing nucleotide triphosphate hydrolases"/>
    <property type="match status" value="1"/>
</dbReference>
<dbReference type="HAMAP" id="MF_00096">
    <property type="entry name" value="MutS"/>
    <property type="match status" value="1"/>
</dbReference>
<dbReference type="InterPro" id="IPR005748">
    <property type="entry name" value="DNA_mismatch_repair_MutS"/>
</dbReference>
<dbReference type="InterPro" id="IPR007695">
    <property type="entry name" value="DNA_mismatch_repair_MutS-lik_N"/>
</dbReference>
<dbReference type="InterPro" id="IPR017261">
    <property type="entry name" value="DNA_mismatch_repair_MutS/MSH"/>
</dbReference>
<dbReference type="InterPro" id="IPR000432">
    <property type="entry name" value="DNA_mismatch_repair_MutS_C"/>
</dbReference>
<dbReference type="InterPro" id="IPR007861">
    <property type="entry name" value="DNA_mismatch_repair_MutS_clamp"/>
</dbReference>
<dbReference type="InterPro" id="IPR007696">
    <property type="entry name" value="DNA_mismatch_repair_MutS_core"/>
</dbReference>
<dbReference type="InterPro" id="IPR016151">
    <property type="entry name" value="DNA_mismatch_repair_MutS_N"/>
</dbReference>
<dbReference type="InterPro" id="IPR036187">
    <property type="entry name" value="DNA_mismatch_repair_MutS_sf"/>
</dbReference>
<dbReference type="InterPro" id="IPR007860">
    <property type="entry name" value="DNA_mmatch_repair_MutS_con_dom"/>
</dbReference>
<dbReference type="InterPro" id="IPR045076">
    <property type="entry name" value="MutS"/>
</dbReference>
<dbReference type="InterPro" id="IPR036678">
    <property type="entry name" value="MutS_con_dom_sf"/>
</dbReference>
<dbReference type="InterPro" id="IPR027417">
    <property type="entry name" value="P-loop_NTPase"/>
</dbReference>
<dbReference type="NCBIfam" id="TIGR01070">
    <property type="entry name" value="mutS1"/>
    <property type="match status" value="1"/>
</dbReference>
<dbReference type="NCBIfam" id="NF003810">
    <property type="entry name" value="PRK05399.1"/>
    <property type="match status" value="1"/>
</dbReference>
<dbReference type="PANTHER" id="PTHR11361:SF34">
    <property type="entry name" value="DNA MISMATCH REPAIR PROTEIN MSH1, MITOCHONDRIAL"/>
    <property type="match status" value="1"/>
</dbReference>
<dbReference type="PANTHER" id="PTHR11361">
    <property type="entry name" value="DNA MISMATCH REPAIR PROTEIN MUTS FAMILY MEMBER"/>
    <property type="match status" value="1"/>
</dbReference>
<dbReference type="Pfam" id="PF01624">
    <property type="entry name" value="MutS_I"/>
    <property type="match status" value="1"/>
</dbReference>
<dbReference type="Pfam" id="PF05188">
    <property type="entry name" value="MutS_II"/>
    <property type="match status" value="1"/>
</dbReference>
<dbReference type="Pfam" id="PF05192">
    <property type="entry name" value="MutS_III"/>
    <property type="match status" value="1"/>
</dbReference>
<dbReference type="Pfam" id="PF05190">
    <property type="entry name" value="MutS_IV"/>
    <property type="match status" value="1"/>
</dbReference>
<dbReference type="Pfam" id="PF00488">
    <property type="entry name" value="MutS_V"/>
    <property type="match status" value="1"/>
</dbReference>
<dbReference type="PIRSF" id="PIRSF037677">
    <property type="entry name" value="DNA_mis_repair_Msh6"/>
    <property type="match status" value="1"/>
</dbReference>
<dbReference type="SMART" id="SM00534">
    <property type="entry name" value="MUTSac"/>
    <property type="match status" value="1"/>
</dbReference>
<dbReference type="SMART" id="SM00533">
    <property type="entry name" value="MUTSd"/>
    <property type="match status" value="1"/>
</dbReference>
<dbReference type="SUPFAM" id="SSF55271">
    <property type="entry name" value="DNA repair protein MutS, domain I"/>
    <property type="match status" value="1"/>
</dbReference>
<dbReference type="SUPFAM" id="SSF53150">
    <property type="entry name" value="DNA repair protein MutS, domain II"/>
    <property type="match status" value="1"/>
</dbReference>
<dbReference type="SUPFAM" id="SSF48334">
    <property type="entry name" value="DNA repair protein MutS, domain III"/>
    <property type="match status" value="1"/>
</dbReference>
<dbReference type="SUPFAM" id="SSF52540">
    <property type="entry name" value="P-loop containing nucleoside triphosphate hydrolases"/>
    <property type="match status" value="1"/>
</dbReference>
<dbReference type="PROSITE" id="PS00486">
    <property type="entry name" value="DNA_MISMATCH_REPAIR_2"/>
    <property type="match status" value="1"/>
</dbReference>
<accession>A6QGJ4</accession>
<comment type="function">
    <text evidence="1">This protein is involved in the repair of mismatches in DNA. It is possible that it carries out the mismatch recognition step. This protein has a weak ATPase activity.</text>
</comment>
<comment type="similarity">
    <text evidence="1">Belongs to the DNA mismatch repair MutS family.</text>
</comment>
<reference key="1">
    <citation type="journal article" date="2008" name="J. Bacteriol.">
        <title>Genome sequence of Staphylococcus aureus strain Newman and comparative analysis of staphylococcal genomes: polymorphism and evolution of two major pathogenicity islands.</title>
        <authorList>
            <person name="Baba T."/>
            <person name="Bae T."/>
            <person name="Schneewind O."/>
            <person name="Takeuchi F."/>
            <person name="Hiramatsu K."/>
        </authorList>
    </citation>
    <scope>NUCLEOTIDE SEQUENCE [LARGE SCALE GENOMIC DNA]</scope>
    <source>
        <strain>Newman</strain>
    </source>
</reference>
<keyword id="KW-0067">ATP-binding</keyword>
<keyword id="KW-0227">DNA damage</keyword>
<keyword id="KW-0234">DNA repair</keyword>
<keyword id="KW-0238">DNA-binding</keyword>
<keyword id="KW-0547">Nucleotide-binding</keyword>